<proteinExistence type="evidence at protein level"/>
<sequence length="1118" mass="123915">MTSIYTSTEPTNSAFTTEDYKPQLVEGVNSVLVIGSGGLSIGQAGEFDYSGSQAIKALKEDNKFTILVNPNIATNQTSHSLADKIYYLPVTPEYITYIIELERPDAILLTFGGQTGLNCGVALDESGVLAKYNVKVLGTPIKTLITSEDRDLFASALKDINIPIAESFACETVDEALEAAERVKYPVIVRSAYALGGLGSGFANNASEMKELAAQSLSLAPQILVEKSLKGWKEVEYEVVRDRVGNCITVCNMENFDPLGVHTGDSMVFAPSQTLSDEEFHMLRSAAIKIIRHLGVIGECNVQYALQPDGLDYRVIEVNARLSRSSALASKATGYPLAYTAAKIGLGYTLPELPNPITKTTVANFEPSLDYIVAKIPKWDLSKFQYVDRSIGSSMKSVGEVMAIGRNYEEAFQKALRQVDPSLLGFQGSTEFGDQLDEALRTPTDRRVLAIGQALIHENYTVERVNELSKIDKWFLYKCMNIVNIYKELESVKSLSDLSKDLLQRAKKLGFSDKQIAVTINKHASTNINELEIRSLRKTLGIIPFVKRIDTLAAEFPAQTNYLYTTYNATKNDVEFNENGMLVLGSGVYRIGSSVEFDWCAVNTAKTLRDQGKKTIMINYNPETVSTDFDEVDRLYFEELSYERVMDIYELEQSEGCIISVGGQLPQNIALKLYDNGCNIMGTNPNDIDRAENRHKFSSILDSIDVDQPEWSELTSVEEAKLFASKVNYPVLIRPSYVLSGAAMSVVNNEEELKAKLTLASDVSPDHPVVMSKFIEGAQEIDVDAVAYNGNVLVHAISEHVENAGVHSGDASLVLPPQHLSDDVKIALKDIADKVAKAWKITGPFNMQIIKDGEHTLKVIECNIRASRSFPFVSKVLGVNFIEIAVKAFLGGDIVPKPVDLMLNKKYDYVATKVPQFSFTRLAGADPFLGVEMASTGEVASFGRDLIESYWTAIQSTMNFHVPLPPSGILFGGDTSREYLGQVASIVATIGYRIYTTNETTKTYLQEHIKEKNAKVSLIKFPKNDKRKLRELFQEYDIKAVFNLASKRAESTDDVDYIMRRNAIDFAIPLFNEPQTALLFAKCLKAKIAEKIKILESHDVIVPPEVRSWDEFIGFKAY</sequence>
<dbReference type="EC" id="6.3.4.16"/>
<dbReference type="EC" id="6.3.5.5"/>
<dbReference type="EMBL" id="K01178">
    <property type="protein sequence ID" value="AAA66902.1"/>
    <property type="molecule type" value="Genomic_DNA"/>
</dbReference>
<dbReference type="EMBL" id="Z49609">
    <property type="protein sequence ID" value="CAA89639.1"/>
    <property type="molecule type" value="Genomic_DNA"/>
</dbReference>
<dbReference type="EMBL" id="BK006943">
    <property type="protein sequence ID" value="DAA08894.1"/>
    <property type="molecule type" value="Genomic_DNA"/>
</dbReference>
<dbReference type="PIR" id="A01199">
    <property type="entry name" value="SYBYCP"/>
</dbReference>
<dbReference type="RefSeq" id="NP_012643.3">
    <property type="nucleotide sequence ID" value="NM_001181767.3"/>
</dbReference>
<dbReference type="SMR" id="P03965"/>
<dbReference type="BioGRID" id="33865">
    <property type="interactions" value="74"/>
</dbReference>
<dbReference type="ComplexPortal" id="CPX-579">
    <property type="entry name" value="Carbamoyl-phosphate synthase arginine-specific"/>
</dbReference>
<dbReference type="DIP" id="DIP-1023N"/>
<dbReference type="FunCoup" id="P03965">
    <property type="interactions" value="573"/>
</dbReference>
<dbReference type="IntAct" id="P03965">
    <property type="interactions" value="50"/>
</dbReference>
<dbReference type="MINT" id="P03965"/>
<dbReference type="STRING" id="4932.YJR109C"/>
<dbReference type="CarbonylDB" id="P03965"/>
<dbReference type="iPTMnet" id="P03965"/>
<dbReference type="PaxDb" id="4932-YJR109C"/>
<dbReference type="PeptideAtlas" id="P03965"/>
<dbReference type="EnsemblFungi" id="YJR109C_mRNA">
    <property type="protein sequence ID" value="YJR109C"/>
    <property type="gene ID" value="YJR109C"/>
</dbReference>
<dbReference type="GeneID" id="853573"/>
<dbReference type="KEGG" id="sce:YJR109C"/>
<dbReference type="AGR" id="SGD:S000003870"/>
<dbReference type="SGD" id="S000003870">
    <property type="gene designation" value="CPA2"/>
</dbReference>
<dbReference type="VEuPathDB" id="FungiDB:YJR109C"/>
<dbReference type="eggNOG" id="KOG0370">
    <property type="taxonomic scope" value="Eukaryota"/>
</dbReference>
<dbReference type="HOGENOM" id="CLU_000513_1_3_1"/>
<dbReference type="InParanoid" id="P03965"/>
<dbReference type="OMA" id="FPFNKFP"/>
<dbReference type="OrthoDB" id="1924069at2759"/>
<dbReference type="BioCyc" id="MetaCyc:YJR109C-MONOMER"/>
<dbReference type="BioCyc" id="YEAST:YJR109C-MONOMER"/>
<dbReference type="Reactome" id="R-SCE-70635">
    <property type="pathway name" value="Urea cycle"/>
</dbReference>
<dbReference type="UniPathway" id="UPA00068">
    <property type="reaction ID" value="UER00171"/>
</dbReference>
<dbReference type="BioGRID-ORCS" id="853573">
    <property type="hits" value="1 hit in 10 CRISPR screens"/>
</dbReference>
<dbReference type="PRO" id="PR:P03965"/>
<dbReference type="Proteomes" id="UP000002311">
    <property type="component" value="Chromosome X"/>
</dbReference>
<dbReference type="RNAct" id="P03965">
    <property type="molecule type" value="protein"/>
</dbReference>
<dbReference type="GO" id="GO:0005951">
    <property type="term" value="C:carbamoyl-phosphate synthase complex"/>
    <property type="evidence" value="ECO:0000314"/>
    <property type="project" value="SGD"/>
</dbReference>
<dbReference type="GO" id="GO:0005737">
    <property type="term" value="C:cytoplasm"/>
    <property type="evidence" value="ECO:0000314"/>
    <property type="project" value="ComplexPortal"/>
</dbReference>
<dbReference type="GO" id="GO:0005524">
    <property type="term" value="F:ATP binding"/>
    <property type="evidence" value="ECO:0007669"/>
    <property type="project" value="UniProtKB-KW"/>
</dbReference>
<dbReference type="GO" id="GO:0004087">
    <property type="term" value="F:carbamoyl-phosphate synthase (ammonia) activity"/>
    <property type="evidence" value="ECO:0000318"/>
    <property type="project" value="GO_Central"/>
</dbReference>
<dbReference type="GO" id="GO:0004088">
    <property type="term" value="F:carbamoyl-phosphate synthase (glutamine-hydrolyzing) activity"/>
    <property type="evidence" value="ECO:0007669"/>
    <property type="project" value="UniProtKB-EC"/>
</dbReference>
<dbReference type="GO" id="GO:0046872">
    <property type="term" value="F:metal ion binding"/>
    <property type="evidence" value="ECO:0007669"/>
    <property type="project" value="UniProtKB-KW"/>
</dbReference>
<dbReference type="GO" id="GO:0006526">
    <property type="term" value="P:L-arginine biosynthetic process"/>
    <property type="evidence" value="ECO:0000314"/>
    <property type="project" value="ComplexPortal"/>
</dbReference>
<dbReference type="GO" id="GO:0006221">
    <property type="term" value="P:pyrimidine nucleotide biosynthetic process"/>
    <property type="evidence" value="ECO:0000314"/>
    <property type="project" value="ComplexPortal"/>
</dbReference>
<dbReference type="CDD" id="cd01423">
    <property type="entry name" value="MGS_CPS_I_III"/>
    <property type="match status" value="1"/>
</dbReference>
<dbReference type="FunFam" id="3.30.470.20:FF:000004">
    <property type="entry name" value="Carbamoyl-phosphate synthase (glutamine-hydrolyzing)"/>
    <property type="match status" value="1"/>
</dbReference>
<dbReference type="FunFam" id="1.10.1030.10:FF:000001">
    <property type="entry name" value="Carbamoyl-phosphate synthase large chain"/>
    <property type="match status" value="1"/>
</dbReference>
<dbReference type="FunFam" id="3.30.1490.20:FF:000001">
    <property type="entry name" value="Carbamoyl-phosphate synthase large chain"/>
    <property type="match status" value="1"/>
</dbReference>
<dbReference type="FunFam" id="3.30.470.20:FF:000001">
    <property type="entry name" value="Carbamoyl-phosphate synthase large chain"/>
    <property type="match status" value="1"/>
</dbReference>
<dbReference type="FunFam" id="3.40.50.20:FF:000001">
    <property type="entry name" value="Carbamoyl-phosphate synthase large chain"/>
    <property type="match status" value="1"/>
</dbReference>
<dbReference type="FunFam" id="3.40.50.20:FF:000002">
    <property type="entry name" value="Carbamoyl-phosphate synthase large chain"/>
    <property type="match status" value="1"/>
</dbReference>
<dbReference type="FunFam" id="3.40.50.1380:FF:000019">
    <property type="entry name" value="Carbamyl phosphate synthetase"/>
    <property type="match status" value="1"/>
</dbReference>
<dbReference type="Gene3D" id="3.40.50.20">
    <property type="match status" value="2"/>
</dbReference>
<dbReference type="Gene3D" id="3.30.1490.20">
    <property type="entry name" value="ATP-grasp fold, A domain"/>
    <property type="match status" value="1"/>
</dbReference>
<dbReference type="Gene3D" id="3.30.470.20">
    <property type="entry name" value="ATP-grasp fold, B domain"/>
    <property type="match status" value="2"/>
</dbReference>
<dbReference type="Gene3D" id="1.10.1030.10">
    <property type="entry name" value="Carbamoyl-phosphate synthetase, large subunit oligomerisation domain"/>
    <property type="match status" value="1"/>
</dbReference>
<dbReference type="Gene3D" id="3.40.50.1380">
    <property type="entry name" value="Methylglyoxal synthase-like domain"/>
    <property type="match status" value="1"/>
</dbReference>
<dbReference type="InterPro" id="IPR011761">
    <property type="entry name" value="ATP-grasp"/>
</dbReference>
<dbReference type="InterPro" id="IPR013815">
    <property type="entry name" value="ATP_grasp_subdomain_1"/>
</dbReference>
<dbReference type="InterPro" id="IPR006275">
    <property type="entry name" value="CarbamoylP_synth_lsu"/>
</dbReference>
<dbReference type="InterPro" id="IPR005480">
    <property type="entry name" value="CarbamoylP_synth_lsu_oligo"/>
</dbReference>
<dbReference type="InterPro" id="IPR036897">
    <property type="entry name" value="CarbamoylP_synth_lsu_oligo_sf"/>
</dbReference>
<dbReference type="InterPro" id="IPR005479">
    <property type="entry name" value="CbamoylP_synth_lsu-like_ATP-bd"/>
</dbReference>
<dbReference type="InterPro" id="IPR005483">
    <property type="entry name" value="CbamoylP_synth_lsu_CPSase_dom"/>
</dbReference>
<dbReference type="InterPro" id="IPR011607">
    <property type="entry name" value="MGS-like_dom"/>
</dbReference>
<dbReference type="InterPro" id="IPR036914">
    <property type="entry name" value="MGS-like_dom_sf"/>
</dbReference>
<dbReference type="InterPro" id="IPR016185">
    <property type="entry name" value="PreATP-grasp_dom_sf"/>
</dbReference>
<dbReference type="NCBIfam" id="TIGR01369">
    <property type="entry name" value="CPSaseII_lrg"/>
    <property type="match status" value="1"/>
</dbReference>
<dbReference type="NCBIfam" id="NF003671">
    <property type="entry name" value="PRK05294.1"/>
    <property type="match status" value="1"/>
</dbReference>
<dbReference type="NCBIfam" id="NF009455">
    <property type="entry name" value="PRK12815.1"/>
    <property type="match status" value="1"/>
</dbReference>
<dbReference type="PANTHER" id="PTHR11405:SF53">
    <property type="entry name" value="CARBAMOYL-PHOSPHATE SYNTHASE [AMMONIA], MITOCHONDRIAL"/>
    <property type="match status" value="1"/>
</dbReference>
<dbReference type="PANTHER" id="PTHR11405">
    <property type="entry name" value="CARBAMOYLTRANSFERASE FAMILY MEMBER"/>
    <property type="match status" value="1"/>
</dbReference>
<dbReference type="Pfam" id="PF02786">
    <property type="entry name" value="CPSase_L_D2"/>
    <property type="match status" value="2"/>
</dbReference>
<dbReference type="Pfam" id="PF02787">
    <property type="entry name" value="CPSase_L_D3"/>
    <property type="match status" value="1"/>
</dbReference>
<dbReference type="Pfam" id="PF02142">
    <property type="entry name" value="MGS"/>
    <property type="match status" value="1"/>
</dbReference>
<dbReference type="PRINTS" id="PR00098">
    <property type="entry name" value="CPSASE"/>
</dbReference>
<dbReference type="SMART" id="SM01096">
    <property type="entry name" value="CPSase_L_D3"/>
    <property type="match status" value="1"/>
</dbReference>
<dbReference type="SUPFAM" id="SSF48108">
    <property type="entry name" value="Carbamoyl phosphate synthetase, large subunit connection domain"/>
    <property type="match status" value="1"/>
</dbReference>
<dbReference type="SUPFAM" id="SSF56059">
    <property type="entry name" value="Glutathione synthetase ATP-binding domain-like"/>
    <property type="match status" value="2"/>
</dbReference>
<dbReference type="SUPFAM" id="SSF52335">
    <property type="entry name" value="Methylglyoxal synthase-like"/>
    <property type="match status" value="1"/>
</dbReference>
<dbReference type="SUPFAM" id="SSF52440">
    <property type="entry name" value="PreATP-grasp domain"/>
    <property type="match status" value="2"/>
</dbReference>
<dbReference type="PROSITE" id="PS50975">
    <property type="entry name" value="ATP_GRASP"/>
    <property type="match status" value="2"/>
</dbReference>
<dbReference type="PROSITE" id="PS00866">
    <property type="entry name" value="CPSASE_1"/>
    <property type="match status" value="2"/>
</dbReference>
<dbReference type="PROSITE" id="PS00867">
    <property type="entry name" value="CPSASE_2"/>
    <property type="match status" value="2"/>
</dbReference>
<dbReference type="PROSITE" id="PS51855">
    <property type="entry name" value="MGS"/>
    <property type="match status" value="1"/>
</dbReference>
<reference key="1">
    <citation type="journal article" date="1983" name="J. Biol. Chem.">
        <title>Yeast carbamyl phosphate synthetase. Structure of the yeast gene and homology to Escherichia coli carbamyl phosphate synthetase.</title>
        <authorList>
            <person name="Lusty C.J."/>
            <person name="Widgren E.E."/>
            <person name="Broglie K.E."/>
            <person name="Nyunoya H."/>
        </authorList>
    </citation>
    <scope>NUCLEOTIDE SEQUENCE [GENOMIC DNA]</scope>
</reference>
<reference key="2">
    <citation type="journal article" date="1996" name="EMBO J.">
        <title>Complete nucleotide sequence of Saccharomyces cerevisiae chromosome X.</title>
        <authorList>
            <person name="Galibert F."/>
            <person name="Alexandraki D."/>
            <person name="Baur A."/>
            <person name="Boles E."/>
            <person name="Chalwatzis N."/>
            <person name="Chuat J.-C."/>
            <person name="Coster F."/>
            <person name="Cziepluch C."/>
            <person name="de Haan M."/>
            <person name="Domdey H."/>
            <person name="Durand P."/>
            <person name="Entian K.-D."/>
            <person name="Gatius M."/>
            <person name="Goffeau A."/>
            <person name="Grivell L.A."/>
            <person name="Hennemann A."/>
            <person name="Herbert C.J."/>
            <person name="Heumann K."/>
            <person name="Hilger F."/>
            <person name="Hollenberg C.P."/>
            <person name="Huang M.-E."/>
            <person name="Jacq C."/>
            <person name="Jauniaux J.-C."/>
            <person name="Katsoulou C."/>
            <person name="Kirchrath L."/>
            <person name="Kleine K."/>
            <person name="Kordes E."/>
            <person name="Koetter P."/>
            <person name="Liebl S."/>
            <person name="Louis E.J."/>
            <person name="Manus V."/>
            <person name="Mewes H.-W."/>
            <person name="Miosga T."/>
            <person name="Obermaier B."/>
            <person name="Perea J."/>
            <person name="Pohl T.M."/>
            <person name="Portetelle D."/>
            <person name="Pujol A."/>
            <person name="Purnelle B."/>
            <person name="Ramezani Rad M."/>
            <person name="Rasmussen S.W."/>
            <person name="Rose M."/>
            <person name="Rossau R."/>
            <person name="Schaaff-Gerstenschlaeger I."/>
            <person name="Smits P.H.M."/>
            <person name="Scarcez T."/>
            <person name="Soriano N."/>
            <person name="To Van D."/>
            <person name="Tzermia M."/>
            <person name="Van Broekhoven A."/>
            <person name="Vandenbol M."/>
            <person name="Wedler H."/>
            <person name="von Wettstein D."/>
            <person name="Wambutt R."/>
            <person name="Zagulski M."/>
            <person name="Zollner A."/>
            <person name="Karpfinger-Hartl L."/>
        </authorList>
    </citation>
    <scope>NUCLEOTIDE SEQUENCE [LARGE SCALE GENOMIC DNA]</scope>
    <source>
        <strain>ATCC 204508 / S288c</strain>
    </source>
</reference>
<reference key="3">
    <citation type="journal article" date="2014" name="G3 (Bethesda)">
        <title>The reference genome sequence of Saccharomyces cerevisiae: Then and now.</title>
        <authorList>
            <person name="Engel S.R."/>
            <person name="Dietrich F.S."/>
            <person name="Fisk D.G."/>
            <person name="Binkley G."/>
            <person name="Balakrishnan R."/>
            <person name="Costanzo M.C."/>
            <person name="Dwight S.S."/>
            <person name="Hitz B.C."/>
            <person name="Karra K."/>
            <person name="Nash R.S."/>
            <person name="Weng S."/>
            <person name="Wong E.D."/>
            <person name="Lloyd P."/>
            <person name="Skrzypek M.S."/>
            <person name="Miyasato S.R."/>
            <person name="Simison M."/>
            <person name="Cherry J.M."/>
        </authorList>
    </citation>
    <scope>GENOME REANNOTATION</scope>
    <source>
        <strain>ATCC 204508 / S288c</strain>
    </source>
</reference>
<reference key="4">
    <citation type="journal article" date="1989" name="Mol. Cell. Biol.">
        <title>Arginine restriction induced by delta-N-(phosphonacetyl)-L-ornithine signals increased expression of HIS3, TRP5, CPA1, and CPA2 in Saccharomyces cerevisiae.</title>
        <authorList>
            <person name="Kinney D.M."/>
            <person name="Lusty C.J."/>
        </authorList>
    </citation>
    <scope>NUCLEOTIDE SEQUENCE [GENOMIC DNA] OF 1-7</scope>
</reference>
<reference key="5">
    <citation type="journal article" date="1965" name="J. Gen. Microbiol.">
        <title>The biosynthesis of carbamoyl phosphate in Saccharomyces cerevisiae.</title>
        <authorList>
            <person name="Lacroute F."/>
            <person name="Pierard A."/>
            <person name="Grenson M."/>
            <person name="Wiame J.M."/>
        </authorList>
    </citation>
    <scope>FUNCTION</scope>
    <scope>CATALYTIC ACTIVITY</scope>
    <scope>PATHWAY</scope>
</reference>
<reference key="6">
    <citation type="book" date="1973" name="The Enzymes of Glutamine Metabolism">
        <title>A comparison of the organization of carbamylphosphate synthesis in Saccharomyces cerevisiae and Escherichia coli, based on genetical and biochemical evidences.</title>
        <editorList>
            <person name="Prusiner S.B."/>
            <person name="Stadtman E.R."/>
        </editorList>
        <authorList>
            <person name="Pierard A."/>
            <person name="Grenson M."/>
            <person name="Glansdorff N."/>
            <person name="Wiame J.M."/>
        </authorList>
    </citation>
    <scope>FUNCTION</scope>
</reference>
<reference key="7">
    <citation type="journal article" date="1973" name="Symp. Soc. Exp. Biol.">
        <title>Control of transcarbamoylation in micro-organisms.</title>
        <authorList>
            <person name="Wiame J.M."/>
            <person name="Stalon V."/>
            <person name="Pierard A."/>
            <person name="Messenguy F."/>
        </authorList>
    </citation>
    <scope>FUNCTION</scope>
</reference>
<reference key="8">
    <citation type="journal article" date="1977" name="Eur. J. Biochem.">
        <title>Change in location of ornithine carbamoyltransferase and carbamoylphosphate synthetase among yeasts in relation to the arginase/ornithine carbamoyltransferase regulatory complex and the energy status of the cells.</title>
        <authorList>
            <person name="Urrestarazu L.A."/>
            <person name="Vissers S."/>
            <person name="Wiame J.M."/>
        </authorList>
    </citation>
    <scope>SUBCELLULAR LOCATION</scope>
</reference>
<reference key="9">
    <citation type="journal article" date="1978" name="J. Bacteriol.">
        <title>Arginine metabolism in Saccharomyces cerevisiae: subcellular localization of the enzymes.</title>
        <authorList>
            <person name="Jauniaux J.-C."/>
            <person name="Urrestarazu L.A."/>
            <person name="Wiame J.-M."/>
        </authorList>
    </citation>
    <scope>SUBCELLULAR LOCATION</scope>
</reference>
<reference key="10">
    <citation type="journal article" date="1978" name="J. Bacteriol.">
        <title>Structure-function relationships in the arginine pathway carbamoylphosphate synthase of Saccharomyces cerevisiae.</title>
        <authorList>
            <person name="Pierard A."/>
            <person name="Schroeter B."/>
        </authorList>
    </citation>
    <scope>CATALYTIC ACTIVITY</scope>
    <scope>BIOPHYSICOCHEMICAL PROPERTIES</scope>
    <scope>SUBUNIT</scope>
</reference>
<reference key="11">
    <citation type="journal article" date="1978" name="J. Gen. Microbiol.">
        <title>Purification and properties of the arginine-specific carbamoyl-phosphate synthase from Saccharomyces cerevisiae.</title>
        <authorList>
            <person name="Price C.W."/>
            <person name="Holwell J.H."/>
            <person name="Abdelal A.T."/>
        </authorList>
    </citation>
    <scope>CATALYTIC ACTIVITY</scope>
    <scope>BIOPHYSICOCHEMICAL PROPERTIES</scope>
    <scope>INDUCTION</scope>
</reference>
<reference key="12">
    <citation type="journal article" date="1996" name="J. Biol. Chem.">
        <title>Requirement for the carboxyl-terminal domain of Saccharomyces cerevisiae carbamoyl-phosphate synthetase.</title>
        <authorList>
            <person name="Lim A.L."/>
            <person name="Powers-Lee S.G."/>
        </authorList>
    </citation>
    <scope>DOMAIN</scope>
</reference>
<reference key="13">
    <citation type="journal article" date="2002" name="Arch. Biochem. Biophys.">
        <title>Mutational analysis of ATP-grasp residues in the two ATP sites of Saccharomyces cerevisiae carbamoyl phosphate synthetase.</title>
        <authorList>
            <person name="Eroglu B."/>
            <person name="Powers-Lee S.G."/>
        </authorList>
    </citation>
    <scope>MUTAGENESIS OF LEU-229; HIS-262; ASP-265; ILE-316; HIS-807 AND ASP-810</scope>
</reference>
<reference key="14">
    <citation type="journal article" date="2003" name="Nature">
        <title>Global analysis of protein localization in budding yeast.</title>
        <authorList>
            <person name="Huh W.-K."/>
            <person name="Falvo J.V."/>
            <person name="Gerke L.C."/>
            <person name="Carroll A.S."/>
            <person name="Howson R.W."/>
            <person name="Weissman J.S."/>
            <person name="O'Shea E.K."/>
        </authorList>
    </citation>
    <scope>SUBCELLULAR LOCATION [LARGE SCALE ANALYSIS]</scope>
</reference>
<reference key="15">
    <citation type="journal article" date="2003" name="Nature">
        <title>Global analysis of protein expression in yeast.</title>
        <authorList>
            <person name="Ghaemmaghami S."/>
            <person name="Huh W.-K."/>
            <person name="Bower K."/>
            <person name="Howson R.W."/>
            <person name="Belle A."/>
            <person name="Dephoure N."/>
            <person name="O'Shea E.K."/>
            <person name="Weissman J.S."/>
        </authorList>
    </citation>
    <scope>LEVEL OF PROTEIN EXPRESSION [LARGE SCALE ANALYSIS]</scope>
</reference>
<gene>
    <name type="primary">CPA2</name>
    <name type="ordered locus">YJR109C</name>
    <name type="ORF">J2002</name>
</gene>
<name>CARB_YEAST</name>
<comment type="function">
    <text evidence="9 11 12 14">Large subunit of the arginine-specific carbamoyl phosphate synthase (CPSase). CPSase catalyzes the formation of carbamoyl phosphate from the ammonia moiety of glutamine, hydrogencarbonate, and phosphate donated by ATP, constituting the first step of 2 biosynthetic pathways, one leading to arginine and/or urea and the other to pyrimidine nucleotides. The large subunit (synthetase) binds the substrates ammonia (free or transferred from glutamine from the small subunit), hydrogencarbonate and ATP and carries out an ATP-coupled ligase reaction, activating hydrogencarbonate by forming carboxy phosphate which reacts with ammonia to form carbamoyl phosphate.</text>
</comment>
<comment type="catalytic activity">
    <reaction evidence="9 10 12">
        <text>hydrogencarbonate + L-glutamine + 2 ATP + H2O = carbamoyl phosphate + L-glutamate + 2 ADP + phosphate + 2 H(+)</text>
        <dbReference type="Rhea" id="RHEA:18633"/>
        <dbReference type="ChEBI" id="CHEBI:15377"/>
        <dbReference type="ChEBI" id="CHEBI:15378"/>
        <dbReference type="ChEBI" id="CHEBI:17544"/>
        <dbReference type="ChEBI" id="CHEBI:29985"/>
        <dbReference type="ChEBI" id="CHEBI:30616"/>
        <dbReference type="ChEBI" id="CHEBI:43474"/>
        <dbReference type="ChEBI" id="CHEBI:58228"/>
        <dbReference type="ChEBI" id="CHEBI:58359"/>
        <dbReference type="ChEBI" id="CHEBI:456216"/>
        <dbReference type="EC" id="6.3.5.5"/>
    </reaction>
</comment>
<comment type="catalytic activity">
    <molecule>Carbamoyl phosphate synthase arginine-specific large chain</molecule>
    <reaction evidence="9 10 12">
        <text>hydrogencarbonate + NH4(+) + 2 ATP = carbamoyl phosphate + 2 ADP + phosphate + 2 H(+)</text>
        <dbReference type="Rhea" id="RHEA:18029"/>
        <dbReference type="ChEBI" id="CHEBI:15378"/>
        <dbReference type="ChEBI" id="CHEBI:17544"/>
        <dbReference type="ChEBI" id="CHEBI:28938"/>
        <dbReference type="ChEBI" id="CHEBI:30616"/>
        <dbReference type="ChEBI" id="CHEBI:43474"/>
        <dbReference type="ChEBI" id="CHEBI:58228"/>
        <dbReference type="ChEBI" id="CHEBI:456216"/>
        <dbReference type="EC" id="6.3.4.16"/>
    </reaction>
</comment>
<comment type="cofactor">
    <cofactor evidence="2">
        <name>Mg(2+)</name>
        <dbReference type="ChEBI" id="CHEBI:18420"/>
    </cofactor>
    <cofactor evidence="2">
        <name>Mn(2+)</name>
        <dbReference type="ChEBI" id="CHEBI:29035"/>
    </cofactor>
    <text evidence="2">Binds 4 Mg(2+) or Mn(2+) ions per subunit.</text>
</comment>
<comment type="biophysicochemical properties">
    <kinetics>
        <KM evidence="9">4.3 mM for hydrogencarbonate</KM>
        <KM evidence="9">75 mM for NH4(+)</KM>
        <KM evidence="10">0.2 mM for ATP</KM>
        <KM evidence="4">6.08 mM for ATP (for the ammonia-dependent ATPase reaction)</KM>
        <Vmax evidence="4">0.64 umol/min/mg enzyme (for the ammonia-dependent ATPase reaction)</Vmax>
    </kinetics>
    <phDependence>
        <text evidence="10">Optimum pH is 8.0.</text>
    </phDependence>
</comment>
<comment type="pathway">
    <text evidence="17">Amino-acid biosynthesis; L-arginine biosynthesis; carbamoyl phosphate from bicarbonate: step 1/1.</text>
</comment>
<comment type="subunit">
    <text evidence="9 12">Heterodimer composed of 2 chains; the small (or glutamine) chain promotes the hydrolysis of glutamine to ammonia, which is used by the large (or ammonia) chain to synthesize carbamoyl phosphate.</text>
</comment>
<comment type="subcellular location">
    <subcellularLocation>
        <location evidence="5 7 8">Cytoplasm</location>
    </subcellularLocation>
</comment>
<comment type="induction">
    <text evidence="10">Negatively regulated by arginine.</text>
</comment>
<comment type="domain">
    <text evidence="1">The large subunit is composed of 2 ATP-grasp domains that are involved in binding the 2 ATP molecules needed for carbamoyl phosphate synthesis. The N-terminal ATP-grasp domain (referred to as the carboxyphosphate synthetic component) catalyzes the ATP-dependent phosphorylation of hydrogencarbonate to carboxyphosphate and the subsequent nucleophilic attack by ammonia to form a carbamate intermediate. The C-terminal ATP-grasp domain (referred to as the carbamoyl phosphate synthetic component) then catalyzes the phosphorylation of carbamate with the second ATP to form the end product carbamoyl phosphate. The reactive and unstable enzyme intermediates are sequentially channeled from one active site to the next through the interior of the protein over a distance of at least 96 A.</text>
</comment>
<comment type="domain">
    <text evidence="13">The C-terminal MGS-like domain is required for catalytic function.</text>
</comment>
<comment type="miscellaneous">
    <text evidence="16 17">In S.cerevisiae, this enzyme is synthesized by two pathway-specific (arginine and pyrimidine) genes under separate control. One is linked to the arginine pathway and is designated CPSase A (CPA1-CPA2); it is repressed by arginine. A second one, CPSase P, is part of a multifunctional protein (URA3) encoding 3 enzymatic activities of the pyrimidine pathway (GATase, CPSase, and ATCase); it is feedback inhibited and repressed by pyrimidines. The 2 synthases appear to contribute to the formation of a single cellular pool of carbamoyl phosphate, in contrast to Schizosaccharomyces pombe and Neurospora crassa, in which the arginine pathway CPSase is localized in mitochondria and the carbamoyl phosphate synthesized by each synthase is channeled to its respective pathway.</text>
</comment>
<comment type="miscellaneous">
    <text evidence="6">Present with 18000 molecules/cell in log phase SD medium.</text>
</comment>
<comment type="similarity">
    <text evidence="15">Belongs to the CarB family.</text>
</comment>
<accession>P03965</accession>
<accession>D6VWS8</accession>
<keyword id="KW-0028">Amino-acid biosynthesis</keyword>
<keyword id="KW-0055">Arginine biosynthesis</keyword>
<keyword id="KW-0067">ATP-binding</keyword>
<keyword id="KW-0963">Cytoplasm</keyword>
<keyword id="KW-0436">Ligase</keyword>
<keyword id="KW-0464">Manganese</keyword>
<keyword id="KW-0479">Metal-binding</keyword>
<keyword id="KW-0547">Nucleotide-binding</keyword>
<keyword id="KW-1185">Reference proteome</keyword>
<keyword id="KW-0677">Repeat</keyword>
<feature type="chain" id="PRO_0000145091" description="Carbamoyl phosphate synthase arginine-specific large chain">
    <location>
        <begin position="1"/>
        <end position="1118"/>
    </location>
</feature>
<feature type="domain" description="ATP-grasp 1" evidence="2">
    <location>
        <begin position="154"/>
        <end position="346"/>
    </location>
</feature>
<feature type="domain" description="ATP-grasp 2" evidence="2">
    <location>
        <begin position="698"/>
        <end position="890"/>
    </location>
</feature>
<feature type="domain" description="MGS-like" evidence="3">
    <location>
        <begin position="960"/>
        <end position="1118"/>
    </location>
</feature>
<feature type="region of interest" description="Carboxyphosphate synthetic domain" evidence="1">
    <location>
        <begin position="23"/>
        <end position="420"/>
    </location>
</feature>
<feature type="region of interest" description="Oligomerization domain" evidence="1">
    <location>
        <begin position="421"/>
        <end position="573"/>
    </location>
</feature>
<feature type="region of interest" description="Carbamoyl phosphate synthetic domain" evidence="1">
    <location>
        <begin position="574"/>
        <end position="958"/>
    </location>
</feature>
<feature type="region of interest" description="Allosteric domain" evidence="1">
    <location>
        <begin position="959"/>
        <end position="1102"/>
    </location>
</feature>
<feature type="binding site" evidence="1">
    <location>
        <position position="150"/>
    </location>
    <ligand>
        <name>ATP</name>
        <dbReference type="ChEBI" id="CHEBI:30616"/>
        <label>1</label>
    </ligand>
</feature>
<feature type="binding site" evidence="1">
    <location>
        <position position="190"/>
    </location>
    <ligand>
        <name>ATP</name>
        <dbReference type="ChEBI" id="CHEBI:30616"/>
        <label>1</label>
    </ligand>
</feature>
<feature type="binding site" evidence="1">
    <location>
        <position position="196"/>
    </location>
    <ligand>
        <name>ATP</name>
        <dbReference type="ChEBI" id="CHEBI:30616"/>
        <label>1</label>
    </ligand>
</feature>
<feature type="binding site" evidence="1">
    <location>
        <position position="197"/>
    </location>
    <ligand>
        <name>ATP</name>
        <dbReference type="ChEBI" id="CHEBI:30616"/>
        <label>1</label>
    </ligand>
</feature>
<feature type="binding site" evidence="1">
    <location>
        <position position="227"/>
    </location>
    <ligand>
        <name>ATP</name>
        <dbReference type="ChEBI" id="CHEBI:30616"/>
        <label>1</label>
    </ligand>
</feature>
<feature type="binding site" evidence="1">
    <location>
        <position position="229"/>
    </location>
    <ligand>
        <name>ATP</name>
        <dbReference type="ChEBI" id="CHEBI:30616"/>
        <label>1</label>
    </ligand>
</feature>
<feature type="binding site" evidence="1">
    <location>
        <position position="234"/>
    </location>
    <ligand>
        <name>ATP</name>
        <dbReference type="ChEBI" id="CHEBI:30616"/>
        <label>1</label>
    </ligand>
</feature>
<feature type="binding site" evidence="1">
    <location>
        <position position="260"/>
    </location>
    <ligand>
        <name>ATP</name>
        <dbReference type="ChEBI" id="CHEBI:30616"/>
        <label>1</label>
    </ligand>
</feature>
<feature type="binding site" evidence="1">
    <location>
        <position position="261"/>
    </location>
    <ligand>
        <name>ATP</name>
        <dbReference type="ChEBI" id="CHEBI:30616"/>
        <label>1</label>
    </ligand>
</feature>
<feature type="binding site" evidence="1">
    <location>
        <position position="262"/>
    </location>
    <ligand>
        <name>ATP</name>
        <dbReference type="ChEBI" id="CHEBI:30616"/>
        <label>1</label>
    </ligand>
</feature>
<feature type="binding site" evidence="1">
    <location>
        <position position="303"/>
    </location>
    <ligand>
        <name>ATP</name>
        <dbReference type="ChEBI" id="CHEBI:30616"/>
        <label>1</label>
    </ligand>
</feature>
<feature type="binding site" evidence="2">
    <location>
        <position position="303"/>
    </location>
    <ligand>
        <name>Mg(2+)</name>
        <dbReference type="ChEBI" id="CHEBI:18420"/>
        <label>1</label>
    </ligand>
</feature>
<feature type="binding site" evidence="2">
    <location>
        <position position="303"/>
    </location>
    <ligand>
        <name>Mn(2+)</name>
        <dbReference type="ChEBI" id="CHEBI:29035"/>
        <label>1</label>
    </ligand>
</feature>
<feature type="binding site" evidence="1">
    <location>
        <position position="317"/>
    </location>
    <ligand>
        <name>ATP</name>
        <dbReference type="ChEBI" id="CHEBI:30616"/>
        <label>1</label>
    </ligand>
</feature>
<feature type="binding site" evidence="2">
    <location>
        <position position="317"/>
    </location>
    <ligand>
        <name>Mg(2+)</name>
        <dbReference type="ChEBI" id="CHEBI:18420"/>
        <label>1</label>
    </ligand>
</feature>
<feature type="binding site" evidence="2">
    <location>
        <position position="317"/>
    </location>
    <ligand>
        <name>Mg(2+)</name>
        <dbReference type="ChEBI" id="CHEBI:18420"/>
        <label>2</label>
    </ligand>
</feature>
<feature type="binding site" evidence="2">
    <location>
        <position position="317"/>
    </location>
    <ligand>
        <name>Mn(2+)</name>
        <dbReference type="ChEBI" id="CHEBI:29035"/>
        <label>1</label>
    </ligand>
</feature>
<feature type="binding site" evidence="2">
    <location>
        <position position="317"/>
    </location>
    <ligand>
        <name>Mn(2+)</name>
        <dbReference type="ChEBI" id="CHEBI:29035"/>
        <label>2</label>
    </ligand>
</feature>
<feature type="binding site" evidence="2">
    <location>
        <position position="319"/>
    </location>
    <ligand>
        <name>Mg(2+)</name>
        <dbReference type="ChEBI" id="CHEBI:18420"/>
        <label>2</label>
    </ligand>
</feature>
<feature type="binding site" evidence="2">
    <location>
        <position position="319"/>
    </location>
    <ligand>
        <name>Mn(2+)</name>
        <dbReference type="ChEBI" id="CHEBI:29035"/>
        <label>2</label>
    </ligand>
</feature>
<feature type="binding site" evidence="1">
    <location>
        <position position="734"/>
    </location>
    <ligand>
        <name>ATP</name>
        <dbReference type="ChEBI" id="CHEBI:30616"/>
        <label>2</label>
    </ligand>
</feature>
<feature type="binding site" evidence="1">
    <location>
        <position position="773"/>
    </location>
    <ligand>
        <name>ATP</name>
        <dbReference type="ChEBI" id="CHEBI:30616"/>
        <label>2</label>
    </ligand>
</feature>
<feature type="binding site" evidence="1">
    <location>
        <position position="775"/>
    </location>
    <ligand>
        <name>ATP</name>
        <dbReference type="ChEBI" id="CHEBI:30616"/>
        <label>2</label>
    </ligand>
</feature>
<feature type="binding site" evidence="1">
    <location>
        <position position="780"/>
    </location>
    <ligand>
        <name>ATP</name>
        <dbReference type="ChEBI" id="CHEBI:30616"/>
        <label>2</label>
    </ligand>
</feature>
<feature type="binding site" evidence="1">
    <location>
        <position position="805"/>
    </location>
    <ligand>
        <name>ATP</name>
        <dbReference type="ChEBI" id="CHEBI:30616"/>
        <label>2</label>
    </ligand>
</feature>
<feature type="binding site" evidence="1">
    <location>
        <position position="806"/>
    </location>
    <ligand>
        <name>ATP</name>
        <dbReference type="ChEBI" id="CHEBI:30616"/>
        <label>2</label>
    </ligand>
</feature>
<feature type="binding site" evidence="1">
    <location>
        <position position="807"/>
    </location>
    <ligand>
        <name>ATP</name>
        <dbReference type="ChEBI" id="CHEBI:30616"/>
        <label>2</label>
    </ligand>
</feature>
<feature type="binding site" evidence="1">
    <location>
        <position position="808"/>
    </location>
    <ligand>
        <name>ATP</name>
        <dbReference type="ChEBI" id="CHEBI:30616"/>
        <label>2</label>
    </ligand>
</feature>
<feature type="binding site" evidence="1">
    <location>
        <position position="848"/>
    </location>
    <ligand>
        <name>ATP</name>
        <dbReference type="ChEBI" id="CHEBI:30616"/>
        <label>2</label>
    </ligand>
</feature>
<feature type="binding site" evidence="2">
    <location>
        <position position="848"/>
    </location>
    <ligand>
        <name>Mg(2+)</name>
        <dbReference type="ChEBI" id="CHEBI:18420"/>
        <label>3</label>
    </ligand>
</feature>
<feature type="binding site" evidence="2">
    <location>
        <position position="848"/>
    </location>
    <ligand>
        <name>Mn(2+)</name>
        <dbReference type="ChEBI" id="CHEBI:29035"/>
        <label>3</label>
    </ligand>
</feature>
<feature type="binding site" evidence="1">
    <location>
        <position position="861"/>
    </location>
    <ligand>
        <name>ATP</name>
        <dbReference type="ChEBI" id="CHEBI:30616"/>
        <label>2</label>
    </ligand>
</feature>
<feature type="binding site" evidence="2">
    <location>
        <position position="861"/>
    </location>
    <ligand>
        <name>Mg(2+)</name>
        <dbReference type="ChEBI" id="CHEBI:18420"/>
        <label>3</label>
    </ligand>
</feature>
<feature type="binding site" evidence="2">
    <location>
        <position position="861"/>
    </location>
    <ligand>
        <name>Mg(2+)</name>
        <dbReference type="ChEBI" id="CHEBI:18420"/>
        <label>4</label>
    </ligand>
</feature>
<feature type="binding site" evidence="2">
    <location>
        <position position="861"/>
    </location>
    <ligand>
        <name>Mn(2+)</name>
        <dbReference type="ChEBI" id="CHEBI:29035"/>
        <label>3</label>
    </ligand>
</feature>
<feature type="binding site" evidence="2">
    <location>
        <position position="861"/>
    </location>
    <ligand>
        <name>Mn(2+)</name>
        <dbReference type="ChEBI" id="CHEBI:29035"/>
        <label>4</label>
    </ligand>
</feature>
<feature type="binding site" evidence="2">
    <location>
        <position position="863"/>
    </location>
    <ligand>
        <name>Mg(2+)</name>
        <dbReference type="ChEBI" id="CHEBI:18420"/>
        <label>4</label>
    </ligand>
</feature>
<feature type="binding site" evidence="2">
    <location>
        <position position="863"/>
    </location>
    <ligand>
        <name>Mn(2+)</name>
        <dbReference type="ChEBI" id="CHEBI:29035"/>
        <label>4</label>
    </ligand>
</feature>
<feature type="mutagenesis site" description="Abolishes ammonia-dependent ATPase activity." evidence="4">
    <original>L</original>
    <variation>G</variation>
    <location>
        <position position="229"/>
    </location>
</feature>
<feature type="mutagenesis site" description="No effect." evidence="4">
    <original>H</original>
    <variation>N</variation>
    <location>
        <position position="262"/>
    </location>
</feature>
<feature type="mutagenesis site" description="Reduces ammonia-dependent ATPase activity 17-58 fold." evidence="4">
    <original>D</original>
    <variation>A</variation>
    <variation>E</variation>
    <variation>N</variation>
    <location>
        <position position="265"/>
    </location>
</feature>
<feature type="mutagenesis site" description="Reduces ammonia-dependent ATPase activity 17-64 fold." evidence="4">
    <original>I</original>
    <variation>G</variation>
    <variation>S</variation>
    <variation>H</variation>
    <location>
        <position position="316"/>
    </location>
</feature>
<feature type="mutagenesis site" description="No effect." evidence="4">
    <original>H</original>
    <variation>N</variation>
    <location>
        <position position="807"/>
    </location>
</feature>
<feature type="mutagenesis site" description="Abolishes ammonia-dependent ATPase activity." evidence="4">
    <original>D</original>
    <variation>A</variation>
    <variation>E</variation>
    <variation>N</variation>
    <location>
        <position position="810"/>
    </location>
</feature>
<evidence type="ECO:0000250" key="1">
    <source>
        <dbReference type="UniProtKB" id="P00968"/>
    </source>
</evidence>
<evidence type="ECO:0000255" key="2">
    <source>
        <dbReference type="PROSITE-ProRule" id="PRU00409"/>
    </source>
</evidence>
<evidence type="ECO:0000255" key="3">
    <source>
        <dbReference type="PROSITE-ProRule" id="PRU01202"/>
    </source>
</evidence>
<evidence type="ECO:0000269" key="4">
    <source>
    </source>
</evidence>
<evidence type="ECO:0000269" key="5">
    <source>
    </source>
</evidence>
<evidence type="ECO:0000269" key="6">
    <source>
    </source>
</evidence>
<evidence type="ECO:0000269" key="7">
    <source>
    </source>
</evidence>
<evidence type="ECO:0000269" key="8">
    <source>
    </source>
</evidence>
<evidence type="ECO:0000269" key="9">
    <source>
    </source>
</evidence>
<evidence type="ECO:0000269" key="10">
    <source>
    </source>
</evidence>
<evidence type="ECO:0000269" key="11">
    <source>
    </source>
</evidence>
<evidence type="ECO:0000269" key="12">
    <source>
    </source>
</evidence>
<evidence type="ECO:0000269" key="13">
    <source>
    </source>
</evidence>
<evidence type="ECO:0000269" key="14">
    <source ref="6"/>
</evidence>
<evidence type="ECO:0000305" key="15"/>
<evidence type="ECO:0000305" key="16">
    <source>
    </source>
</evidence>
<evidence type="ECO:0000305" key="17">
    <source>
    </source>
</evidence>
<protein>
    <recommendedName>
        <fullName evidence="15">Carbamoyl phosphate synthase arginine-specific large chain</fullName>
        <shortName>CPS</shortName>
        <shortName>CPSase</shortName>
        <shortName>CPSase-arg</shortName>
        <ecNumber>6.3.4.16</ecNumber>
        <ecNumber>6.3.5.5</ecNumber>
    </recommendedName>
    <alternativeName>
        <fullName>Ammonium-dependent carbamoyl phosphate synthetase</fullName>
    </alternativeName>
    <alternativeName>
        <fullName>Arginine-specific carbamoyl phosphate synthetase, ammonia chain</fullName>
    </alternativeName>
    <alternativeName>
        <fullName>Carbamoyl phosphate synthase A</fullName>
        <shortName>CPS-A</shortName>
    </alternativeName>
    <alternativeName>
        <fullName>Glutamine-dependent carbamoyl phosphate synthetase</fullName>
    </alternativeName>
</protein>
<organism>
    <name type="scientific">Saccharomyces cerevisiae (strain ATCC 204508 / S288c)</name>
    <name type="common">Baker's yeast</name>
    <dbReference type="NCBI Taxonomy" id="559292"/>
    <lineage>
        <taxon>Eukaryota</taxon>
        <taxon>Fungi</taxon>
        <taxon>Dikarya</taxon>
        <taxon>Ascomycota</taxon>
        <taxon>Saccharomycotina</taxon>
        <taxon>Saccharomycetes</taxon>
        <taxon>Saccharomycetales</taxon>
        <taxon>Saccharomycetaceae</taxon>
        <taxon>Saccharomyces</taxon>
    </lineage>
</organism>